<keyword id="KW-0285">Flavoprotein</keyword>
<keyword id="KW-0288">FMN</keyword>
<keyword id="KW-0520">NAD</keyword>
<keyword id="KW-0521">NADP</keyword>
<keyword id="KW-0547">Nucleotide-binding</keyword>
<keyword id="KW-0560">Oxidoreductase</keyword>
<gene>
    <name type="ordered locus">YpsIP31758_2261</name>
</gene>
<sequence length="199" mass="20808">MAKILVLYYSMYGHIETLAGAIAEGARKVSGVDVTIKRVPETMPAEAFAKAGGKTNQQAPVATPHELADYDGIIFGTPTRFGNMSGQMRTFLDQTGGLWASGALYGKVASVFASTGTGGGQEHTITSTWTTLAHHGFIIVPIGYGAKELFDVSQTRGGTPYGATTIAGGDGSRQPSAEELAIARFQGEHVAKITAKLKG</sequence>
<protein>
    <recommendedName>
        <fullName evidence="1">NAD(P)H dehydrogenase (quinone)</fullName>
        <ecNumber evidence="1">1.6.5.2</ecNumber>
    </recommendedName>
    <alternativeName>
        <fullName>Flavoprotein WrbA</fullName>
    </alternativeName>
    <alternativeName>
        <fullName evidence="1">NAD(P)H:quinone oxidoreductase</fullName>
        <shortName evidence="1">NQO</shortName>
    </alternativeName>
</protein>
<comment type="catalytic activity">
    <reaction evidence="1">
        <text>a quinone + NADH + H(+) = a quinol + NAD(+)</text>
        <dbReference type="Rhea" id="RHEA:46160"/>
        <dbReference type="ChEBI" id="CHEBI:15378"/>
        <dbReference type="ChEBI" id="CHEBI:24646"/>
        <dbReference type="ChEBI" id="CHEBI:57540"/>
        <dbReference type="ChEBI" id="CHEBI:57945"/>
        <dbReference type="ChEBI" id="CHEBI:132124"/>
        <dbReference type="EC" id="1.6.5.2"/>
    </reaction>
</comment>
<comment type="catalytic activity">
    <reaction evidence="1">
        <text>a quinone + NADPH + H(+) = a quinol + NADP(+)</text>
        <dbReference type="Rhea" id="RHEA:46164"/>
        <dbReference type="ChEBI" id="CHEBI:15378"/>
        <dbReference type="ChEBI" id="CHEBI:24646"/>
        <dbReference type="ChEBI" id="CHEBI:57783"/>
        <dbReference type="ChEBI" id="CHEBI:58349"/>
        <dbReference type="ChEBI" id="CHEBI:132124"/>
        <dbReference type="EC" id="1.6.5.2"/>
    </reaction>
</comment>
<comment type="cofactor">
    <cofactor evidence="1">
        <name>FMN</name>
        <dbReference type="ChEBI" id="CHEBI:58210"/>
    </cofactor>
    <text evidence="1">Binds 1 FMN per monomer.</text>
</comment>
<comment type="similarity">
    <text evidence="1">Belongs to the WrbA family.</text>
</comment>
<feature type="chain" id="PRO_1000084149" description="NAD(P)H dehydrogenase (quinone)">
    <location>
        <begin position="1"/>
        <end position="199"/>
    </location>
</feature>
<feature type="domain" description="Flavodoxin-like" evidence="1">
    <location>
        <begin position="4"/>
        <end position="190"/>
    </location>
</feature>
<feature type="binding site" evidence="1">
    <location>
        <begin position="10"/>
        <end position="15"/>
    </location>
    <ligand>
        <name>FMN</name>
        <dbReference type="ChEBI" id="CHEBI:58210"/>
    </ligand>
</feature>
<feature type="binding site" evidence="1">
    <location>
        <position position="12"/>
    </location>
    <ligand>
        <name>NAD(+)</name>
        <dbReference type="ChEBI" id="CHEBI:57540"/>
    </ligand>
</feature>
<feature type="binding site" evidence="1">
    <location>
        <begin position="79"/>
        <end position="81"/>
    </location>
    <ligand>
        <name>FMN</name>
        <dbReference type="ChEBI" id="CHEBI:58210"/>
    </ligand>
</feature>
<feature type="binding site" evidence="1">
    <location>
        <position position="99"/>
    </location>
    <ligand>
        <name>substrate</name>
    </ligand>
</feature>
<feature type="binding site" evidence="1">
    <location>
        <begin position="114"/>
        <end position="119"/>
    </location>
    <ligand>
        <name>FMN</name>
        <dbReference type="ChEBI" id="CHEBI:58210"/>
    </ligand>
</feature>
<feature type="binding site" evidence="1">
    <location>
        <position position="134"/>
    </location>
    <ligand>
        <name>FMN</name>
        <dbReference type="ChEBI" id="CHEBI:58210"/>
    </ligand>
</feature>
<organism>
    <name type="scientific">Yersinia pseudotuberculosis serotype O:1b (strain IP 31758)</name>
    <dbReference type="NCBI Taxonomy" id="349747"/>
    <lineage>
        <taxon>Bacteria</taxon>
        <taxon>Pseudomonadati</taxon>
        <taxon>Pseudomonadota</taxon>
        <taxon>Gammaproteobacteria</taxon>
        <taxon>Enterobacterales</taxon>
        <taxon>Yersiniaceae</taxon>
        <taxon>Yersinia</taxon>
    </lineage>
</organism>
<proteinExistence type="inferred from homology"/>
<accession>A7FJ02</accession>
<name>NQOR_YERP3</name>
<reference key="1">
    <citation type="journal article" date="2007" name="PLoS Genet.">
        <title>The complete genome sequence of Yersinia pseudotuberculosis IP31758, the causative agent of Far East scarlet-like fever.</title>
        <authorList>
            <person name="Eppinger M."/>
            <person name="Rosovitz M.J."/>
            <person name="Fricke W.F."/>
            <person name="Rasko D.A."/>
            <person name="Kokorina G."/>
            <person name="Fayolle C."/>
            <person name="Lindler L.E."/>
            <person name="Carniel E."/>
            <person name="Ravel J."/>
        </authorList>
    </citation>
    <scope>NUCLEOTIDE SEQUENCE [LARGE SCALE GENOMIC DNA]</scope>
    <source>
        <strain>IP 31758</strain>
    </source>
</reference>
<evidence type="ECO:0000255" key="1">
    <source>
        <dbReference type="HAMAP-Rule" id="MF_01017"/>
    </source>
</evidence>
<dbReference type="EC" id="1.6.5.2" evidence="1"/>
<dbReference type="EMBL" id="CP000720">
    <property type="protein sequence ID" value="ABS46995.1"/>
    <property type="molecule type" value="Genomic_DNA"/>
</dbReference>
<dbReference type="SMR" id="A7FJ02"/>
<dbReference type="KEGG" id="ypi:YpsIP31758_2261"/>
<dbReference type="HOGENOM" id="CLU_051402_0_2_6"/>
<dbReference type="Proteomes" id="UP000002412">
    <property type="component" value="Chromosome"/>
</dbReference>
<dbReference type="GO" id="GO:0016020">
    <property type="term" value="C:membrane"/>
    <property type="evidence" value="ECO:0007669"/>
    <property type="project" value="TreeGrafter"/>
</dbReference>
<dbReference type="GO" id="GO:0050660">
    <property type="term" value="F:flavin adenine dinucleotide binding"/>
    <property type="evidence" value="ECO:0007669"/>
    <property type="project" value="UniProtKB-UniRule"/>
</dbReference>
<dbReference type="GO" id="GO:0010181">
    <property type="term" value="F:FMN binding"/>
    <property type="evidence" value="ECO:0007669"/>
    <property type="project" value="InterPro"/>
</dbReference>
<dbReference type="GO" id="GO:0051287">
    <property type="term" value="F:NAD binding"/>
    <property type="evidence" value="ECO:0007669"/>
    <property type="project" value="UniProtKB-UniRule"/>
</dbReference>
<dbReference type="GO" id="GO:0050136">
    <property type="term" value="F:NADH:ubiquinone reductase (non-electrogenic) activity"/>
    <property type="evidence" value="ECO:0007669"/>
    <property type="project" value="RHEA"/>
</dbReference>
<dbReference type="GO" id="GO:0050661">
    <property type="term" value="F:NADP binding"/>
    <property type="evidence" value="ECO:0007669"/>
    <property type="project" value="UniProtKB-UniRule"/>
</dbReference>
<dbReference type="GO" id="GO:0008753">
    <property type="term" value="F:NADPH dehydrogenase (quinone) activity"/>
    <property type="evidence" value="ECO:0007669"/>
    <property type="project" value="RHEA"/>
</dbReference>
<dbReference type="FunFam" id="3.40.50.360:FF:000004">
    <property type="entry name" value="NAD(P)H dehydrogenase (quinone)"/>
    <property type="match status" value="1"/>
</dbReference>
<dbReference type="Gene3D" id="3.40.50.360">
    <property type="match status" value="1"/>
</dbReference>
<dbReference type="HAMAP" id="MF_01017">
    <property type="entry name" value="NQOR"/>
    <property type="match status" value="1"/>
</dbReference>
<dbReference type="InterPro" id="IPR008254">
    <property type="entry name" value="Flavodoxin/NO_synth"/>
</dbReference>
<dbReference type="InterPro" id="IPR029039">
    <property type="entry name" value="Flavoprotein-like_sf"/>
</dbReference>
<dbReference type="InterPro" id="IPR010089">
    <property type="entry name" value="Flavoprotein_WrbA-like"/>
</dbReference>
<dbReference type="InterPro" id="IPR005025">
    <property type="entry name" value="FMN_Rdtase-like_dom"/>
</dbReference>
<dbReference type="InterPro" id="IPR037513">
    <property type="entry name" value="NQO"/>
</dbReference>
<dbReference type="NCBIfam" id="TIGR01755">
    <property type="entry name" value="flav_wrbA"/>
    <property type="match status" value="1"/>
</dbReference>
<dbReference type="NCBIfam" id="NF002999">
    <property type="entry name" value="PRK03767.1"/>
    <property type="match status" value="1"/>
</dbReference>
<dbReference type="PANTHER" id="PTHR30546">
    <property type="entry name" value="FLAVODOXIN-RELATED PROTEIN WRBA-RELATED"/>
    <property type="match status" value="1"/>
</dbReference>
<dbReference type="PANTHER" id="PTHR30546:SF23">
    <property type="entry name" value="FLAVOPROTEIN-LIKE PROTEIN YCP4-RELATED"/>
    <property type="match status" value="1"/>
</dbReference>
<dbReference type="Pfam" id="PF03358">
    <property type="entry name" value="FMN_red"/>
    <property type="match status" value="1"/>
</dbReference>
<dbReference type="SUPFAM" id="SSF52218">
    <property type="entry name" value="Flavoproteins"/>
    <property type="match status" value="1"/>
</dbReference>
<dbReference type="PROSITE" id="PS50902">
    <property type="entry name" value="FLAVODOXIN_LIKE"/>
    <property type="match status" value="1"/>
</dbReference>